<proteinExistence type="inferred from homology"/>
<dbReference type="EMBL" id="M30756">
    <property type="protein sequence ID" value="AAA43464.1"/>
    <property type="molecule type" value="Genomic_RNA"/>
</dbReference>
<dbReference type="SMR" id="P15667"/>
<dbReference type="GO" id="GO:0019029">
    <property type="term" value="C:helical viral capsid"/>
    <property type="evidence" value="ECO:0007669"/>
    <property type="project" value="UniProtKB-UniRule"/>
</dbReference>
<dbReference type="GO" id="GO:0043657">
    <property type="term" value="C:host cell"/>
    <property type="evidence" value="ECO:0007669"/>
    <property type="project" value="GOC"/>
</dbReference>
<dbReference type="GO" id="GO:0042025">
    <property type="term" value="C:host cell nucleus"/>
    <property type="evidence" value="ECO:0007669"/>
    <property type="project" value="UniProtKB-SubCell"/>
</dbReference>
<dbReference type="GO" id="GO:1990904">
    <property type="term" value="C:ribonucleoprotein complex"/>
    <property type="evidence" value="ECO:0007669"/>
    <property type="project" value="UniProtKB-KW"/>
</dbReference>
<dbReference type="GO" id="GO:0019013">
    <property type="term" value="C:viral nucleocapsid"/>
    <property type="evidence" value="ECO:0007669"/>
    <property type="project" value="UniProtKB-UniRule"/>
</dbReference>
<dbReference type="GO" id="GO:0003723">
    <property type="term" value="F:RNA binding"/>
    <property type="evidence" value="ECO:0007669"/>
    <property type="project" value="UniProtKB-UniRule"/>
</dbReference>
<dbReference type="GO" id="GO:0005198">
    <property type="term" value="F:structural molecule activity"/>
    <property type="evidence" value="ECO:0007669"/>
    <property type="project" value="UniProtKB-UniRule"/>
</dbReference>
<dbReference type="GO" id="GO:0046718">
    <property type="term" value="P:symbiont entry into host cell"/>
    <property type="evidence" value="ECO:0007669"/>
    <property type="project" value="UniProtKB-KW"/>
</dbReference>
<dbReference type="GO" id="GO:0075732">
    <property type="term" value="P:viral penetration into host nucleus"/>
    <property type="evidence" value="ECO:0007669"/>
    <property type="project" value="UniProtKB-UniRule"/>
</dbReference>
<dbReference type="HAMAP" id="MF_04070">
    <property type="entry name" value="INFV_NCAP"/>
    <property type="match status" value="1"/>
</dbReference>
<dbReference type="InterPro" id="IPR002141">
    <property type="entry name" value="Flu_NP"/>
</dbReference>
<dbReference type="Pfam" id="PF00506">
    <property type="entry name" value="Flu_NP"/>
    <property type="match status" value="1"/>
</dbReference>
<dbReference type="SUPFAM" id="SSF161003">
    <property type="entry name" value="flu NP-like"/>
    <property type="match status" value="1"/>
</dbReference>
<sequence length="498" mass="56226">MASQGTKRSYEQMETGGERQNANEIRASVGRMVGGIGRFYIQMCTELKLSDNEGRLIQNSITIERMVLSAFDERRNKYLEEHPSTGRDPKKTGGPIYRRRDGKWVRELVLYDKEELRRIWRQANNGEDATAGLTHLMIWHSNLNDATYQRTRALVRTGMDPRMCSLMQGSTLPRRSGAAGAAVKGVGTMVMELIRMIKRGVNDRNFWRGENGRRTRIAYERMCNILKGKFQTAAQRAMMDQVRESRNPGNAEIEDLIFLARSALILRGAVAHKSCLPACVYGLAVASGYDFEREGYSLVGIDPFRLLQNSQVFSLIRPNENPAHKSQLVWMACHSAAFEDLRVSSFIRGTRVLPRGQLSTRGVQIASNENMETMNSSTLELRSKYWAIRTRSGGNTNQQRASAGQVSVQPSFSVQRNLPFERATIMAAFTGNPEGRTSDMRTEIIRMMENSRPEDVSFQGRGVFELSDEKATNPIVPSFDMSNEGSYFFGDNAEEYDN</sequence>
<organism>
    <name type="scientific">Influenza A virus (strain A/Gull/Maryland/1815/1979 H13N6)</name>
    <dbReference type="NCBI Taxonomy" id="385601"/>
    <lineage>
        <taxon>Viruses</taxon>
        <taxon>Riboviria</taxon>
        <taxon>Orthornavirae</taxon>
        <taxon>Negarnaviricota</taxon>
        <taxon>Polyploviricotina</taxon>
        <taxon>Insthoviricetes</taxon>
        <taxon>Articulavirales</taxon>
        <taxon>Orthomyxoviridae</taxon>
        <taxon>Alphainfluenzavirus</taxon>
        <taxon>Alphainfluenzavirus influenzae</taxon>
        <taxon>Influenza A virus</taxon>
    </lineage>
</organism>
<gene>
    <name evidence="1" type="primary">NP</name>
</gene>
<organismHost>
    <name type="scientific">Aves</name>
    <dbReference type="NCBI Taxonomy" id="8782"/>
</organismHost>
<feature type="chain" id="PRO_0000079055" description="Nucleoprotein">
    <location>
        <begin position="1"/>
        <end position="498"/>
    </location>
</feature>
<feature type="region of interest" description="Disordered" evidence="2">
    <location>
        <begin position="1"/>
        <end position="22"/>
    </location>
</feature>
<feature type="short sequence motif" description="Unconventional nuclear localization signal" evidence="1">
    <location>
        <begin position="1"/>
        <end position="18"/>
    </location>
</feature>
<feature type="short sequence motif" description="Bipartite nuclear localization signal" evidence="1">
    <location>
        <begin position="198"/>
        <end position="216"/>
    </location>
</feature>
<keyword id="KW-0167">Capsid protein</keyword>
<keyword id="KW-1139">Helical capsid protein</keyword>
<keyword id="KW-1048">Host nucleus</keyword>
<keyword id="KW-0945">Host-virus interaction</keyword>
<keyword id="KW-0687">Ribonucleoprotein</keyword>
<keyword id="KW-0694">RNA-binding</keyword>
<keyword id="KW-0543">Viral nucleoprotein</keyword>
<keyword id="KW-1163">Viral penetration into host nucleus</keyword>
<keyword id="KW-0946">Virion</keyword>
<keyword id="KW-1160">Virus entry into host cell</keyword>
<reference key="1">
    <citation type="journal article" date="1990" name="J. Virol.">
        <title>Evolution of the nucleoprotein gene of influenza A virus.</title>
        <authorList>
            <person name="Gorman O.T."/>
            <person name="Bean W.J."/>
            <person name="Kawaoka Y."/>
            <person name="Webster R.G."/>
        </authorList>
    </citation>
    <scope>NUCLEOTIDE SEQUENCE [GENOMIC RNA]</scope>
</reference>
<name>NCAP_I79A8</name>
<accession>P15667</accession>
<protein>
    <recommendedName>
        <fullName evidence="1">Nucleoprotein</fullName>
    </recommendedName>
    <alternativeName>
        <fullName evidence="1">Nucleocapsid protein</fullName>
        <shortName evidence="1">Protein N</shortName>
    </alternativeName>
</protein>
<evidence type="ECO:0000255" key="1">
    <source>
        <dbReference type="HAMAP-Rule" id="MF_04070"/>
    </source>
</evidence>
<evidence type="ECO:0000256" key="2">
    <source>
        <dbReference type="SAM" id="MobiDB-lite"/>
    </source>
</evidence>
<comment type="function">
    <text evidence="1">Encapsidates the negative strand viral RNA, protecting it from nucleases. The encapsidated genomic RNA is termed the ribonucleoprotein (RNP) and serves as template for transcription and replication. The RNP needs to be localized in the host nucleus to start an infectious cycle, but is too large to diffuse through the nuclear pore complex. NP comprises at least 2 nuclear localization signals that are responsible for the active RNP import into the nucleus through cellular importin alpha/beta pathway. Later in the infection, nclear export of RNPs are mediated through viral proteins NEP interacting with M1 which binds nucleoproteins. It is possible that nucleoprotein binds directly host exportin-1/XPO1 and plays an active role in RNPs nuclear export. M1 interaction with RNP seems to hide nucleoprotein's nuclear localization signals. Soon after a virion infects a new cell, M1 dissociates from the RNP under acidification of the virion driven by M2 protein. Dissociation of M1 from RNP unmasks nucleoprotein's nuclear localization signals, targeting the RNP to the nucleus.</text>
</comment>
<comment type="subunit">
    <text evidence="1">Homomultimerizes to form the nucleocapsid. May bind host exportin-1/XPO1. Binds to viral genomic RNA. Protein-RNA contacts are mediated by a combination of electrostatic interactions between positively charged residues and the phosphate backbone and planar interactions between aromatic side chains and bases.</text>
</comment>
<comment type="subcellular location">
    <subcellularLocation>
        <location evidence="1">Virion</location>
    </subcellularLocation>
    <subcellularLocation>
        <location evidence="1">Host nucleus</location>
    </subcellularLocation>
</comment>
<comment type="PTM">
    <text evidence="1">Late in virus-infected cells, may be cleaved from a 56-kDa protein to a 53-kDa protein by a cellular caspase. This cleavage might be a marker for the onset of apoptosis in infected cells or have a specific function in virus host interaction.</text>
</comment>
<comment type="similarity">
    <text evidence="1">Belongs to the influenza viruses nucleoprotein family.</text>
</comment>